<comment type="function">
    <text evidence="1">Assembly factor of SCF (SKP1-CUL1-F-box protein) E3 ubiquitin ligase complexes that promotes the exchange of the substrate-recognition F-box subunit in SCF complexes, thereby playing a key role in the cellular repertoire of SCF complexes. Acts as a F-box protein exchange factor (By similarity). Involved in the aging process. Longevity-assurance protein.</text>
</comment>
<comment type="subunit">
    <text evidence="4 5">Interacts with unneddylated cullin CDC53.</text>
</comment>
<comment type="interaction">
    <interactant intactId="EBI-2045650">
        <id>Q92325</id>
    </interactant>
    <interactant intactId="EBI-4321">
        <id>Q12018</id>
        <label>CDC53</label>
    </interactant>
    <organismsDiffer>false</organismsDiffer>
    <experiments>10</experiments>
</comment>
<comment type="developmental stage">
    <text>Preferentially expressed in young cells.</text>
</comment>
<comment type="PTM">
    <text>Neddylated at Lys-16.</text>
</comment>
<comment type="miscellaneous">
    <text evidence="3">Present with 195 molecules/cell in log phase SD medium.</text>
</comment>
<comment type="caution">
    <text evidence="7">Acts as an inhibitor of cullin neddylation and SCF complex assembly in vitro (PubMed:19942853). However in vivo experiments in other organisms strongly suggest that it acts as an essential regulator of SCF complex assembly.</text>
</comment>
<comment type="sequence caution" evidence="6">
    <conflict type="frameshift">
        <sequence resource="EMBL-CDS" id="AAB16890"/>
    </conflict>
</comment>
<protein>
    <recommendedName>
        <fullName>Cullin-associated NEDD8-dissociated protein 1 homolog</fullName>
    </recommendedName>
    <alternativeName>
        <fullName>CAND1 homolog</fullName>
    </alternativeName>
    <alternativeName>
        <fullName>Longevity-assurance protein 2</fullName>
    </alternativeName>
</protein>
<gene>
    <name type="primary">LAG2</name>
    <name type="ordered locus">YOL025W</name>
</gene>
<dbReference type="EMBL" id="U50334">
    <property type="protein sequence ID" value="AAB16890.1"/>
    <property type="status" value="ALT_FRAME"/>
    <property type="molecule type" value="Genomic_DNA"/>
</dbReference>
<dbReference type="EMBL" id="Z74767">
    <property type="protein sequence ID" value="CAA99025.1"/>
    <property type="molecule type" value="Genomic_DNA"/>
</dbReference>
<dbReference type="EMBL" id="BK006948">
    <property type="protein sequence ID" value="DAA10756.1"/>
    <property type="molecule type" value="Genomic_DNA"/>
</dbReference>
<dbReference type="RefSeq" id="NP_014617.1">
    <property type="nucleotide sequence ID" value="NM_001183279.1"/>
</dbReference>
<dbReference type="BioGRID" id="34376">
    <property type="interactions" value="74"/>
</dbReference>
<dbReference type="FunCoup" id="Q92325">
    <property type="interactions" value="47"/>
</dbReference>
<dbReference type="IntAct" id="Q92325">
    <property type="interactions" value="8"/>
</dbReference>
<dbReference type="MINT" id="Q92325"/>
<dbReference type="STRING" id="4932.YOL025W"/>
<dbReference type="PaxDb" id="4932-YOL025W"/>
<dbReference type="PeptideAtlas" id="Q92325"/>
<dbReference type="EnsemblFungi" id="YOL025W_mRNA">
    <property type="protein sequence ID" value="YOL025W"/>
    <property type="gene ID" value="YOL025W"/>
</dbReference>
<dbReference type="GeneID" id="854133"/>
<dbReference type="KEGG" id="sce:YOL025W"/>
<dbReference type="AGR" id="SGD:S000005385"/>
<dbReference type="SGD" id="S000005385">
    <property type="gene designation" value="LAG2"/>
</dbReference>
<dbReference type="VEuPathDB" id="FungiDB:YOL025W"/>
<dbReference type="eggNOG" id="ENOG502S2GH">
    <property type="taxonomic scope" value="Eukaryota"/>
</dbReference>
<dbReference type="HOGENOM" id="CLU_026649_0_0_1"/>
<dbReference type="InParanoid" id="Q92325"/>
<dbReference type="OMA" id="ICERRIR"/>
<dbReference type="OrthoDB" id="4034650at2759"/>
<dbReference type="BioCyc" id="YEAST:G3O-33441-MONOMER"/>
<dbReference type="BioGRID-ORCS" id="854133">
    <property type="hits" value="0 hits in 10 CRISPR screens"/>
</dbReference>
<dbReference type="PRO" id="PR:Q92325"/>
<dbReference type="Proteomes" id="UP000002311">
    <property type="component" value="Chromosome XV"/>
</dbReference>
<dbReference type="RNAct" id="Q92325">
    <property type="molecule type" value="protein"/>
</dbReference>
<dbReference type="GO" id="GO:0005739">
    <property type="term" value="C:mitochondrion"/>
    <property type="evidence" value="ECO:0007005"/>
    <property type="project" value="SGD"/>
</dbReference>
<dbReference type="GO" id="GO:0031397">
    <property type="term" value="P:negative regulation of protein ubiquitination"/>
    <property type="evidence" value="ECO:0000315"/>
    <property type="project" value="SGD"/>
</dbReference>
<keyword id="KW-1017">Isopeptide bond</keyword>
<keyword id="KW-1185">Reference proteome</keyword>
<keyword id="KW-0832">Ubl conjugation</keyword>
<keyword id="KW-0833">Ubl conjugation pathway</keyword>
<sequence>MSLHISKLIEQYRSTKDNDLKYMLLRQNFKINDIEDELAPLVNELLLPVLVEEQDMEILNLVSFQVLPDLVLSMISDPAAAQLGWVISLICDPLLNQSMIHANRSFVLIETLRNVLQKIENSPHLDYHQPVNSSLEFISKFIVEMKRHMCDVDAAQLSHSLSESNMLIYIESLNLLLKFSFFSDAASPSVMVTLPFDILNDVFTIAQDYSATNTNESIDRITEKLLLTSTQLTHPVDLENLCPKMKYNTLAAVSRIWYKFGPIVDKLFTNRLLPVLFPPQMGEECNVEDVLEIVHNFHPYFSIRRLKDNRPLLSDSTISQLREGLFGMLSILNDSLTRTQNENDHGSDNLIDSDDGFGSDNDPEQQAYLDELVSEGYDENMYDGDTDDEDADDINVEKNDEATKDITETNKILLIFSELHYPQEERFSELLVELQTKIAINTSLIDKILSKETTELPTHNGEIADLNEILNEVKGNKPIRKNVIFCTLAHTLSLQSGSELSVLQLSIEVIDHLLVKNHSNNITRGEQFQLIKLILPHLKTNKSFIDTLKAGNFTQKIDEGVTLRTMILSLLLQLFPLDYSMLGEILPTIARYSVRDKDLGVRDLSFQLLDQILRTYYNYLIGIDWEWYKDDFYQVLQETCIKKDINTNLLLQFPPYLPHD</sequence>
<proteinExistence type="evidence at protein level"/>
<name>LAG2_YEAST</name>
<reference key="1">
    <citation type="journal article" date="1996" name="Microbiology">
        <title>LAG2, a gene that determines yeast longevity.</title>
        <authorList>
            <person name="Childress A.M."/>
            <person name="Franklin D.S."/>
            <person name="Pinswasdi C."/>
            <person name="Kale S.P."/>
            <person name="Jazwinski S.M."/>
        </authorList>
    </citation>
    <scope>NUCLEOTIDE SEQUENCE [GENOMIC DNA]</scope>
    <source>
        <strain>SP1</strain>
    </source>
</reference>
<reference key="2">
    <citation type="journal article" date="1997" name="Nature">
        <title>The nucleotide sequence of Saccharomyces cerevisiae chromosome XV.</title>
        <authorList>
            <person name="Dujon B."/>
            <person name="Albermann K."/>
            <person name="Aldea M."/>
            <person name="Alexandraki D."/>
            <person name="Ansorge W."/>
            <person name="Arino J."/>
            <person name="Benes V."/>
            <person name="Bohn C."/>
            <person name="Bolotin-Fukuhara M."/>
            <person name="Bordonne R."/>
            <person name="Boyer J."/>
            <person name="Camasses A."/>
            <person name="Casamayor A."/>
            <person name="Casas C."/>
            <person name="Cheret G."/>
            <person name="Cziepluch C."/>
            <person name="Daignan-Fornier B."/>
            <person name="Dang V.-D."/>
            <person name="de Haan M."/>
            <person name="Delius H."/>
            <person name="Durand P."/>
            <person name="Fairhead C."/>
            <person name="Feldmann H."/>
            <person name="Gaillon L."/>
            <person name="Galisson F."/>
            <person name="Gamo F.-J."/>
            <person name="Gancedo C."/>
            <person name="Goffeau A."/>
            <person name="Goulding S.E."/>
            <person name="Grivell L.A."/>
            <person name="Habbig B."/>
            <person name="Hand N.J."/>
            <person name="Hani J."/>
            <person name="Hattenhorst U."/>
            <person name="Hebling U."/>
            <person name="Hernando Y."/>
            <person name="Herrero E."/>
            <person name="Heumann K."/>
            <person name="Hiesel R."/>
            <person name="Hilger F."/>
            <person name="Hofmann B."/>
            <person name="Hollenberg C.P."/>
            <person name="Hughes B."/>
            <person name="Jauniaux J.-C."/>
            <person name="Kalogeropoulos A."/>
            <person name="Katsoulou C."/>
            <person name="Kordes E."/>
            <person name="Lafuente M.J."/>
            <person name="Landt O."/>
            <person name="Louis E.J."/>
            <person name="Maarse A.C."/>
            <person name="Madania A."/>
            <person name="Mannhaupt G."/>
            <person name="Marck C."/>
            <person name="Martin R.P."/>
            <person name="Mewes H.-W."/>
            <person name="Michaux G."/>
            <person name="Paces V."/>
            <person name="Parle-McDermott A.G."/>
            <person name="Pearson B.M."/>
            <person name="Perrin A."/>
            <person name="Pettersson B."/>
            <person name="Poch O."/>
            <person name="Pohl T.M."/>
            <person name="Poirey R."/>
            <person name="Portetelle D."/>
            <person name="Pujol A."/>
            <person name="Purnelle B."/>
            <person name="Ramezani Rad M."/>
            <person name="Rechmann S."/>
            <person name="Schwager C."/>
            <person name="Schweizer M."/>
            <person name="Sor F."/>
            <person name="Sterky F."/>
            <person name="Tarassov I.A."/>
            <person name="Teodoru C."/>
            <person name="Tettelin H."/>
            <person name="Thierry A."/>
            <person name="Tobiasch E."/>
            <person name="Tzermia M."/>
            <person name="Uhlen M."/>
            <person name="Unseld M."/>
            <person name="Valens M."/>
            <person name="Vandenbol M."/>
            <person name="Vetter I."/>
            <person name="Vlcek C."/>
            <person name="Voet M."/>
            <person name="Volckaert G."/>
            <person name="Voss H."/>
            <person name="Wambutt R."/>
            <person name="Wedler H."/>
            <person name="Wiemann S."/>
            <person name="Winsor B."/>
            <person name="Wolfe K.H."/>
            <person name="Zollner A."/>
            <person name="Zumstein E."/>
            <person name="Kleine K."/>
        </authorList>
    </citation>
    <scope>NUCLEOTIDE SEQUENCE [LARGE SCALE GENOMIC DNA]</scope>
    <source>
        <strain>ATCC 204508 / S288c</strain>
    </source>
</reference>
<reference key="3">
    <citation type="journal article" date="2014" name="G3 (Bethesda)">
        <title>The reference genome sequence of Saccharomyces cerevisiae: Then and now.</title>
        <authorList>
            <person name="Engel S.R."/>
            <person name="Dietrich F.S."/>
            <person name="Fisk D.G."/>
            <person name="Binkley G."/>
            <person name="Balakrishnan R."/>
            <person name="Costanzo M.C."/>
            <person name="Dwight S.S."/>
            <person name="Hitz B.C."/>
            <person name="Karra K."/>
            <person name="Nash R.S."/>
            <person name="Weng S."/>
            <person name="Wong E.D."/>
            <person name="Lloyd P."/>
            <person name="Skrzypek M.S."/>
            <person name="Miyasato S.R."/>
            <person name="Simison M."/>
            <person name="Cherry J.M."/>
        </authorList>
    </citation>
    <scope>GENOME REANNOTATION</scope>
    <source>
        <strain>ATCC 204508 / S288c</strain>
    </source>
</reference>
<reference key="4">
    <citation type="journal article" date="2003" name="Nature">
        <title>Global analysis of protein expression in yeast.</title>
        <authorList>
            <person name="Ghaemmaghami S."/>
            <person name="Huh W.-K."/>
            <person name="Bower K."/>
            <person name="Howson R.W."/>
            <person name="Belle A."/>
            <person name="Dephoure N."/>
            <person name="O'Shea E.K."/>
            <person name="Weissman J.S."/>
        </authorList>
    </citation>
    <scope>LEVEL OF PROTEIN EXPRESSION [LARGE SCALE ANALYSIS]</scope>
</reference>
<reference key="5">
    <citation type="journal article" date="2009" name="EMBO J.">
        <title>A longevity protein, Lag2, interacts with SCF complex and regulates SCF function.</title>
        <authorList>
            <person name="Liu Y."/>
            <person name="Mimura S."/>
            <person name="Kishi T."/>
            <person name="Kamura T."/>
        </authorList>
    </citation>
    <scope>INTERACTION WITH CDC53</scope>
</reference>
<reference key="6">
    <citation type="journal article" date="2009" name="EMBO J.">
        <title>Cullin neddylation and substrate-adaptors counteract SCF inhibition by the CAND1-like protein Lag2 in Saccharomyces cerevisiae.</title>
        <authorList>
            <person name="Siergiejuk E."/>
            <person name="Scott D.C."/>
            <person name="Schulman B.A."/>
            <person name="Hofmann K."/>
            <person name="Kurz T."/>
            <person name="Peter M."/>
        </authorList>
    </citation>
    <scope>INTERACTION WITH CDC53</scope>
    <scope>MUTAGENESIS OF LYS-16; 17-ASP--MET-23 AND 551-GLY-ASN-552</scope>
</reference>
<organism>
    <name type="scientific">Saccharomyces cerevisiae (strain ATCC 204508 / S288c)</name>
    <name type="common">Baker's yeast</name>
    <dbReference type="NCBI Taxonomy" id="559292"/>
    <lineage>
        <taxon>Eukaryota</taxon>
        <taxon>Fungi</taxon>
        <taxon>Dikarya</taxon>
        <taxon>Ascomycota</taxon>
        <taxon>Saccharomycotina</taxon>
        <taxon>Saccharomycetes</taxon>
        <taxon>Saccharomycetales</taxon>
        <taxon>Saccharomycetaceae</taxon>
        <taxon>Saccharomyces</taxon>
    </lineage>
</organism>
<accession>Q92325</accession>
<accession>D6W240</accession>
<accession>Q08175</accession>
<feature type="chain" id="PRO_0000084352" description="Cullin-associated NEDD8-dissociated protein 1 homolog">
    <location>
        <begin position="1"/>
        <end position="660"/>
    </location>
</feature>
<feature type="region of interest" description="Disordered" evidence="2">
    <location>
        <begin position="339"/>
        <end position="364"/>
    </location>
</feature>
<feature type="compositionally biased region" description="Acidic residues" evidence="2">
    <location>
        <begin position="351"/>
        <end position="363"/>
    </location>
</feature>
<feature type="cross-link" description="Glycyl lysine isopeptide (Lys-Gly) (interchain with G-Cter in NEDD8)">
    <location>
        <position position="16"/>
    </location>
</feature>
<feature type="mutagenesis site" description="Does not affect interaction with CDC53." evidence="5">
    <original>K</original>
    <variation>R</variation>
    <location>
        <position position="16"/>
    </location>
</feature>
<feature type="mutagenesis site" description="Decreased interaction with CDC53." evidence="5">
    <original>DNDLKYM</original>
    <variation>ANALKAA</variation>
    <location>
        <begin position="17"/>
        <end position="23"/>
    </location>
</feature>
<feature type="mutagenesis site" description="Decreased interaction with CDC53." evidence="5">
    <original>GN</original>
    <variation>AA</variation>
    <location>
        <begin position="551"/>
        <end position="552"/>
    </location>
</feature>
<feature type="sequence conflict" description="In Ref. 1; AAB16890." evidence="6" ref="1">
    <original>R</original>
    <variation>C</variation>
    <location>
        <position position="13"/>
    </location>
</feature>
<feature type="sequence conflict" description="In Ref. 1; AAB16890." evidence="6" ref="1">
    <original>QL</original>
    <variation>HV</variation>
    <location>
        <begin position="156"/>
        <end position="157"/>
    </location>
</feature>
<feature type="sequence conflict" description="In Ref. 1; AAB16890." evidence="6" ref="1">
    <original>CTLAHT</original>
    <variation>VSYAI</variation>
    <location>
        <begin position="486"/>
        <end position="491"/>
    </location>
</feature>
<evidence type="ECO:0000250" key="1"/>
<evidence type="ECO:0000256" key="2">
    <source>
        <dbReference type="SAM" id="MobiDB-lite"/>
    </source>
</evidence>
<evidence type="ECO:0000269" key="3">
    <source>
    </source>
</evidence>
<evidence type="ECO:0000269" key="4">
    <source>
    </source>
</evidence>
<evidence type="ECO:0000269" key="5">
    <source>
    </source>
</evidence>
<evidence type="ECO:0000305" key="6"/>
<evidence type="ECO:0000305" key="7">
    <source>
    </source>
</evidence>